<evidence type="ECO:0000255" key="1">
    <source>
        <dbReference type="HAMAP-Rule" id="MF_00054"/>
    </source>
</evidence>
<protein>
    <recommendedName>
        <fullName evidence="1">Elongation factor G</fullName>
        <shortName evidence="1">EF-G</shortName>
    </recommendedName>
</protein>
<feature type="chain" id="PRO_1000008830" description="Elongation factor G">
    <location>
        <begin position="1"/>
        <end position="698"/>
    </location>
</feature>
<feature type="domain" description="tr-type G">
    <location>
        <begin position="8"/>
        <end position="290"/>
    </location>
</feature>
<feature type="binding site" evidence="1">
    <location>
        <begin position="17"/>
        <end position="24"/>
    </location>
    <ligand>
        <name>GTP</name>
        <dbReference type="ChEBI" id="CHEBI:37565"/>
    </ligand>
</feature>
<feature type="binding site" evidence="1">
    <location>
        <begin position="88"/>
        <end position="92"/>
    </location>
    <ligand>
        <name>GTP</name>
        <dbReference type="ChEBI" id="CHEBI:37565"/>
    </ligand>
</feature>
<feature type="binding site" evidence="1">
    <location>
        <begin position="142"/>
        <end position="145"/>
    </location>
    <ligand>
        <name>GTP</name>
        <dbReference type="ChEBI" id="CHEBI:37565"/>
    </ligand>
</feature>
<comment type="function">
    <text evidence="1">Catalyzes the GTP-dependent ribosomal translocation step during translation elongation. During this step, the ribosome changes from the pre-translocational (PRE) to the post-translocational (POST) state as the newly formed A-site-bound peptidyl-tRNA and P-site-bound deacylated tRNA move to the P and E sites, respectively. Catalyzes the coordinated movement of the two tRNA molecules, the mRNA and conformational changes in the ribosome.</text>
</comment>
<comment type="subcellular location">
    <subcellularLocation>
        <location evidence="1">Cytoplasm</location>
    </subcellularLocation>
</comment>
<comment type="similarity">
    <text evidence="1">Belongs to the TRAFAC class translation factor GTPase superfamily. Classic translation factor GTPase family. EF-G/EF-2 subfamily.</text>
</comment>
<reference key="1">
    <citation type="submission" date="2006-12" db="EMBL/GenBank/DDBJ databases">
        <title>Complete sequence of Halorhodospira halophila SL1.</title>
        <authorList>
            <consortium name="US DOE Joint Genome Institute"/>
            <person name="Copeland A."/>
            <person name="Lucas S."/>
            <person name="Lapidus A."/>
            <person name="Barry K."/>
            <person name="Detter J.C."/>
            <person name="Glavina del Rio T."/>
            <person name="Hammon N."/>
            <person name="Israni S."/>
            <person name="Dalin E."/>
            <person name="Tice H."/>
            <person name="Pitluck S."/>
            <person name="Saunders E."/>
            <person name="Brettin T."/>
            <person name="Bruce D."/>
            <person name="Han C."/>
            <person name="Tapia R."/>
            <person name="Schmutz J."/>
            <person name="Larimer F."/>
            <person name="Land M."/>
            <person name="Hauser L."/>
            <person name="Kyrpides N."/>
            <person name="Mikhailova N."/>
            <person name="Hoff W."/>
            <person name="Richardson P."/>
        </authorList>
    </citation>
    <scope>NUCLEOTIDE SEQUENCE [LARGE SCALE GENOMIC DNA]</scope>
    <source>
        <strain>DSM 244 / SL1</strain>
    </source>
</reference>
<keyword id="KW-0963">Cytoplasm</keyword>
<keyword id="KW-0251">Elongation factor</keyword>
<keyword id="KW-0342">GTP-binding</keyword>
<keyword id="KW-0547">Nucleotide-binding</keyword>
<keyword id="KW-0648">Protein biosynthesis</keyword>
<keyword id="KW-1185">Reference proteome</keyword>
<proteinExistence type="inferred from homology"/>
<dbReference type="EMBL" id="CP000544">
    <property type="protein sequence ID" value="ABM61637.1"/>
    <property type="molecule type" value="Genomic_DNA"/>
</dbReference>
<dbReference type="RefSeq" id="WP_011813660.1">
    <property type="nucleotide sequence ID" value="NC_008789.1"/>
</dbReference>
<dbReference type="SMR" id="A1WVC5"/>
<dbReference type="STRING" id="349124.Hhal_0861"/>
<dbReference type="KEGG" id="hha:Hhal_0861"/>
<dbReference type="eggNOG" id="COG0480">
    <property type="taxonomic scope" value="Bacteria"/>
</dbReference>
<dbReference type="HOGENOM" id="CLU_002794_4_1_6"/>
<dbReference type="OrthoDB" id="9804431at2"/>
<dbReference type="Proteomes" id="UP000000647">
    <property type="component" value="Chromosome"/>
</dbReference>
<dbReference type="GO" id="GO:0005737">
    <property type="term" value="C:cytoplasm"/>
    <property type="evidence" value="ECO:0007669"/>
    <property type="project" value="UniProtKB-SubCell"/>
</dbReference>
<dbReference type="GO" id="GO:0005525">
    <property type="term" value="F:GTP binding"/>
    <property type="evidence" value="ECO:0007669"/>
    <property type="project" value="UniProtKB-UniRule"/>
</dbReference>
<dbReference type="GO" id="GO:0003924">
    <property type="term" value="F:GTPase activity"/>
    <property type="evidence" value="ECO:0007669"/>
    <property type="project" value="InterPro"/>
</dbReference>
<dbReference type="GO" id="GO:0097216">
    <property type="term" value="F:guanosine tetraphosphate binding"/>
    <property type="evidence" value="ECO:0007669"/>
    <property type="project" value="UniProtKB-ARBA"/>
</dbReference>
<dbReference type="GO" id="GO:0003746">
    <property type="term" value="F:translation elongation factor activity"/>
    <property type="evidence" value="ECO:0007669"/>
    <property type="project" value="UniProtKB-UniRule"/>
</dbReference>
<dbReference type="GO" id="GO:0032790">
    <property type="term" value="P:ribosome disassembly"/>
    <property type="evidence" value="ECO:0007669"/>
    <property type="project" value="TreeGrafter"/>
</dbReference>
<dbReference type="CDD" id="cd01886">
    <property type="entry name" value="EF-G"/>
    <property type="match status" value="1"/>
</dbReference>
<dbReference type="CDD" id="cd16262">
    <property type="entry name" value="EFG_III"/>
    <property type="match status" value="1"/>
</dbReference>
<dbReference type="CDD" id="cd01434">
    <property type="entry name" value="EFG_mtEFG1_IV"/>
    <property type="match status" value="1"/>
</dbReference>
<dbReference type="CDD" id="cd03713">
    <property type="entry name" value="EFG_mtEFG_C"/>
    <property type="match status" value="1"/>
</dbReference>
<dbReference type="CDD" id="cd04088">
    <property type="entry name" value="EFG_mtEFG_II"/>
    <property type="match status" value="1"/>
</dbReference>
<dbReference type="FunFam" id="2.40.30.10:FF:000006">
    <property type="entry name" value="Elongation factor G"/>
    <property type="match status" value="1"/>
</dbReference>
<dbReference type="FunFam" id="3.30.230.10:FF:000003">
    <property type="entry name" value="Elongation factor G"/>
    <property type="match status" value="1"/>
</dbReference>
<dbReference type="FunFam" id="3.30.70.240:FF:000001">
    <property type="entry name" value="Elongation factor G"/>
    <property type="match status" value="1"/>
</dbReference>
<dbReference type="FunFam" id="3.30.70.870:FF:000001">
    <property type="entry name" value="Elongation factor G"/>
    <property type="match status" value="1"/>
</dbReference>
<dbReference type="FunFam" id="3.40.50.300:FF:000029">
    <property type="entry name" value="Elongation factor G"/>
    <property type="match status" value="1"/>
</dbReference>
<dbReference type="Gene3D" id="3.30.230.10">
    <property type="match status" value="1"/>
</dbReference>
<dbReference type="Gene3D" id="3.30.70.240">
    <property type="match status" value="1"/>
</dbReference>
<dbReference type="Gene3D" id="3.30.70.870">
    <property type="entry name" value="Elongation Factor G (Translational Gtpase), domain 3"/>
    <property type="match status" value="1"/>
</dbReference>
<dbReference type="Gene3D" id="3.40.50.300">
    <property type="entry name" value="P-loop containing nucleotide triphosphate hydrolases"/>
    <property type="match status" value="1"/>
</dbReference>
<dbReference type="Gene3D" id="2.40.30.10">
    <property type="entry name" value="Translation factors"/>
    <property type="match status" value="1"/>
</dbReference>
<dbReference type="HAMAP" id="MF_00054_B">
    <property type="entry name" value="EF_G_EF_2_B"/>
    <property type="match status" value="1"/>
</dbReference>
<dbReference type="InterPro" id="IPR041095">
    <property type="entry name" value="EFG_II"/>
</dbReference>
<dbReference type="InterPro" id="IPR009022">
    <property type="entry name" value="EFG_III"/>
</dbReference>
<dbReference type="InterPro" id="IPR035647">
    <property type="entry name" value="EFG_III/V"/>
</dbReference>
<dbReference type="InterPro" id="IPR047872">
    <property type="entry name" value="EFG_IV"/>
</dbReference>
<dbReference type="InterPro" id="IPR035649">
    <property type="entry name" value="EFG_V"/>
</dbReference>
<dbReference type="InterPro" id="IPR000640">
    <property type="entry name" value="EFG_V-like"/>
</dbReference>
<dbReference type="InterPro" id="IPR004161">
    <property type="entry name" value="EFTu-like_2"/>
</dbReference>
<dbReference type="InterPro" id="IPR031157">
    <property type="entry name" value="G_TR_CS"/>
</dbReference>
<dbReference type="InterPro" id="IPR027417">
    <property type="entry name" value="P-loop_NTPase"/>
</dbReference>
<dbReference type="InterPro" id="IPR020568">
    <property type="entry name" value="Ribosomal_Su5_D2-typ_SF"/>
</dbReference>
<dbReference type="InterPro" id="IPR014721">
    <property type="entry name" value="Ribsml_uS5_D2-typ_fold_subgr"/>
</dbReference>
<dbReference type="InterPro" id="IPR005225">
    <property type="entry name" value="Small_GTP-bd"/>
</dbReference>
<dbReference type="InterPro" id="IPR000795">
    <property type="entry name" value="T_Tr_GTP-bd_dom"/>
</dbReference>
<dbReference type="InterPro" id="IPR009000">
    <property type="entry name" value="Transl_B-barrel_sf"/>
</dbReference>
<dbReference type="InterPro" id="IPR004540">
    <property type="entry name" value="Transl_elong_EFG/EF2"/>
</dbReference>
<dbReference type="InterPro" id="IPR005517">
    <property type="entry name" value="Transl_elong_EFG/EF2_IV"/>
</dbReference>
<dbReference type="NCBIfam" id="TIGR00484">
    <property type="entry name" value="EF-G"/>
    <property type="match status" value="1"/>
</dbReference>
<dbReference type="NCBIfam" id="NF009379">
    <property type="entry name" value="PRK12740.1-3"/>
    <property type="match status" value="1"/>
</dbReference>
<dbReference type="NCBIfam" id="NF009381">
    <property type="entry name" value="PRK12740.1-5"/>
    <property type="match status" value="1"/>
</dbReference>
<dbReference type="NCBIfam" id="TIGR00231">
    <property type="entry name" value="small_GTP"/>
    <property type="match status" value="1"/>
</dbReference>
<dbReference type="PANTHER" id="PTHR43261:SF1">
    <property type="entry name" value="RIBOSOME-RELEASING FACTOR 2, MITOCHONDRIAL"/>
    <property type="match status" value="1"/>
</dbReference>
<dbReference type="PANTHER" id="PTHR43261">
    <property type="entry name" value="TRANSLATION ELONGATION FACTOR G-RELATED"/>
    <property type="match status" value="1"/>
</dbReference>
<dbReference type="Pfam" id="PF00679">
    <property type="entry name" value="EFG_C"/>
    <property type="match status" value="1"/>
</dbReference>
<dbReference type="Pfam" id="PF14492">
    <property type="entry name" value="EFG_III"/>
    <property type="match status" value="1"/>
</dbReference>
<dbReference type="Pfam" id="PF03764">
    <property type="entry name" value="EFG_IV"/>
    <property type="match status" value="1"/>
</dbReference>
<dbReference type="Pfam" id="PF00009">
    <property type="entry name" value="GTP_EFTU"/>
    <property type="match status" value="1"/>
</dbReference>
<dbReference type="Pfam" id="PF03144">
    <property type="entry name" value="GTP_EFTU_D2"/>
    <property type="match status" value="1"/>
</dbReference>
<dbReference type="PRINTS" id="PR00315">
    <property type="entry name" value="ELONGATNFCT"/>
</dbReference>
<dbReference type="SMART" id="SM00838">
    <property type="entry name" value="EFG_C"/>
    <property type="match status" value="1"/>
</dbReference>
<dbReference type="SMART" id="SM00889">
    <property type="entry name" value="EFG_IV"/>
    <property type="match status" value="1"/>
</dbReference>
<dbReference type="SUPFAM" id="SSF54980">
    <property type="entry name" value="EF-G C-terminal domain-like"/>
    <property type="match status" value="2"/>
</dbReference>
<dbReference type="SUPFAM" id="SSF52540">
    <property type="entry name" value="P-loop containing nucleoside triphosphate hydrolases"/>
    <property type="match status" value="1"/>
</dbReference>
<dbReference type="SUPFAM" id="SSF54211">
    <property type="entry name" value="Ribosomal protein S5 domain 2-like"/>
    <property type="match status" value="1"/>
</dbReference>
<dbReference type="SUPFAM" id="SSF50447">
    <property type="entry name" value="Translation proteins"/>
    <property type="match status" value="1"/>
</dbReference>
<dbReference type="PROSITE" id="PS00301">
    <property type="entry name" value="G_TR_1"/>
    <property type="match status" value="1"/>
</dbReference>
<dbReference type="PROSITE" id="PS51722">
    <property type="entry name" value="G_TR_2"/>
    <property type="match status" value="1"/>
</dbReference>
<sequence length="698" mass="77632">MARKTPIERYRNIGIAAHIDAGKTTTTERILFYTGVSHKMGETHDGAATMDWMSQEQERGITITSAATTCFWRGMDQQYPETRINIIDTPGHVDFTIEVERSLRVLDGAVAVFCAVGGVEPQSETVWRQANKYGVPRIAFVNKMDRAGADFSRVVGQIRDRLGSQAVPIQLPIGAEDNFQGVIDLLRMSAIYWDRDEQGMTYSETEIPEELKADAEAAREEMVEAAAEADEELMDKYLNEGELSHDDIKRGLRQRTLNTEIVLCMCGSAFKNKGVQTLLDAVIEFLPAPNEVPAIEGLLDDEETVVTRESTDDQPFAALAFKIANDPYVGNLTFFRVYSGVLSSGDAVFNPVKGKKERIGRLLQMHSNQREEIKEVRAGDIAAAVGLKDVTTGDTLCDPSNKVTLERMEFPEPVIAVAVEPKTRSDQEKMGQALGRLAQEDPSFRVRTDEESGQTIISGMGELHLDIIVDRLKREFKVEANVGAPQVAYRETIRKQIEQEGKFVRQSGGRGQYGHVHIRMKPQERGEGYSFESKIVGGVVPKEYIPSVDHGCREVMEEGVLAGYPVVDVGVELYDGSYHDVDSSEMAFKIAGSMAFREGFMKADPVLLEPVMKVEVVTPEEYMGDVVGDLNRRRGTVQKMEDIPNGKQIRAQVPLKEMFGYATDLRSNTQGRASYVMEFEEYHEAPASIADEVIKKAS</sequence>
<name>EFG_HALHL</name>
<organism>
    <name type="scientific">Halorhodospira halophila (strain DSM 244 / SL1)</name>
    <name type="common">Ectothiorhodospira halophila (strain DSM 244 / SL1)</name>
    <dbReference type="NCBI Taxonomy" id="349124"/>
    <lineage>
        <taxon>Bacteria</taxon>
        <taxon>Pseudomonadati</taxon>
        <taxon>Pseudomonadota</taxon>
        <taxon>Gammaproteobacteria</taxon>
        <taxon>Chromatiales</taxon>
        <taxon>Ectothiorhodospiraceae</taxon>
        <taxon>Halorhodospira</taxon>
    </lineage>
</organism>
<gene>
    <name evidence="1" type="primary">fusA</name>
    <name type="ordered locus">Hhal_0861</name>
</gene>
<accession>A1WVC5</accession>